<organism>
    <name type="scientific">Protochlamydia amoebophila (strain UWE25)</name>
    <dbReference type="NCBI Taxonomy" id="264201"/>
    <lineage>
        <taxon>Bacteria</taxon>
        <taxon>Pseudomonadati</taxon>
        <taxon>Chlamydiota</taxon>
        <taxon>Chlamydiia</taxon>
        <taxon>Parachlamydiales</taxon>
        <taxon>Parachlamydiaceae</taxon>
        <taxon>Candidatus Protochlamydia</taxon>
    </lineage>
</organism>
<evidence type="ECO:0000255" key="1">
    <source>
        <dbReference type="HAMAP-Rule" id="MF_01151"/>
    </source>
</evidence>
<evidence type="ECO:0000256" key="2">
    <source>
        <dbReference type="SAM" id="MobiDB-lite"/>
    </source>
</evidence>
<gene>
    <name evidence="1" type="primary">grpE</name>
    <name type="ordered locus">pc1498</name>
</gene>
<name>GRPE_PARUW</name>
<reference key="1">
    <citation type="journal article" date="2004" name="Science">
        <title>Illuminating the evolutionary history of chlamydiae.</title>
        <authorList>
            <person name="Horn M."/>
            <person name="Collingro A."/>
            <person name="Schmitz-Esser S."/>
            <person name="Beier C.L."/>
            <person name="Purkhold U."/>
            <person name="Fartmann B."/>
            <person name="Brandt P."/>
            <person name="Nyakatura G.J."/>
            <person name="Droege M."/>
            <person name="Frishman D."/>
            <person name="Rattei T."/>
            <person name="Mewes H.-W."/>
            <person name="Wagner M."/>
        </authorList>
    </citation>
    <scope>NUCLEOTIDE SEQUENCE [LARGE SCALE GENOMIC DNA]</scope>
    <source>
        <strain>UWE25</strain>
    </source>
</reference>
<feature type="chain" id="PRO_0000113830" description="Protein GrpE">
    <location>
        <begin position="1"/>
        <end position="211"/>
    </location>
</feature>
<feature type="region of interest" description="Disordered" evidence="2">
    <location>
        <begin position="1"/>
        <end position="38"/>
    </location>
</feature>
<feature type="compositionally biased region" description="Basic and acidic residues" evidence="2">
    <location>
        <begin position="1"/>
        <end position="13"/>
    </location>
</feature>
<proteinExistence type="inferred from homology"/>
<dbReference type="EMBL" id="BX908798">
    <property type="protein sequence ID" value="CAF24222.1"/>
    <property type="molecule type" value="Genomic_DNA"/>
</dbReference>
<dbReference type="RefSeq" id="WP_011176044.1">
    <property type="nucleotide sequence ID" value="NC_005861.2"/>
</dbReference>
<dbReference type="SMR" id="Q6MB27"/>
<dbReference type="STRING" id="264201.pc1498"/>
<dbReference type="KEGG" id="pcu:PC_RS07180"/>
<dbReference type="eggNOG" id="COG0576">
    <property type="taxonomic scope" value="Bacteria"/>
</dbReference>
<dbReference type="HOGENOM" id="CLU_057217_5_2_0"/>
<dbReference type="OrthoDB" id="9812586at2"/>
<dbReference type="Proteomes" id="UP000000529">
    <property type="component" value="Chromosome"/>
</dbReference>
<dbReference type="GO" id="GO:0005737">
    <property type="term" value="C:cytoplasm"/>
    <property type="evidence" value="ECO:0007669"/>
    <property type="project" value="UniProtKB-SubCell"/>
</dbReference>
<dbReference type="GO" id="GO:0000774">
    <property type="term" value="F:adenyl-nucleotide exchange factor activity"/>
    <property type="evidence" value="ECO:0007669"/>
    <property type="project" value="InterPro"/>
</dbReference>
<dbReference type="GO" id="GO:0042803">
    <property type="term" value="F:protein homodimerization activity"/>
    <property type="evidence" value="ECO:0007669"/>
    <property type="project" value="InterPro"/>
</dbReference>
<dbReference type="GO" id="GO:0051087">
    <property type="term" value="F:protein-folding chaperone binding"/>
    <property type="evidence" value="ECO:0007669"/>
    <property type="project" value="InterPro"/>
</dbReference>
<dbReference type="GO" id="GO:0051082">
    <property type="term" value="F:unfolded protein binding"/>
    <property type="evidence" value="ECO:0007669"/>
    <property type="project" value="TreeGrafter"/>
</dbReference>
<dbReference type="GO" id="GO:0006457">
    <property type="term" value="P:protein folding"/>
    <property type="evidence" value="ECO:0007669"/>
    <property type="project" value="InterPro"/>
</dbReference>
<dbReference type="CDD" id="cd00446">
    <property type="entry name" value="GrpE"/>
    <property type="match status" value="1"/>
</dbReference>
<dbReference type="FunFam" id="2.30.22.10:FF:000001">
    <property type="entry name" value="Protein GrpE"/>
    <property type="match status" value="1"/>
</dbReference>
<dbReference type="Gene3D" id="3.90.20.20">
    <property type="match status" value="1"/>
</dbReference>
<dbReference type="Gene3D" id="2.30.22.10">
    <property type="entry name" value="Head domain of nucleotide exchange factor GrpE"/>
    <property type="match status" value="1"/>
</dbReference>
<dbReference type="HAMAP" id="MF_01151">
    <property type="entry name" value="GrpE"/>
    <property type="match status" value="1"/>
</dbReference>
<dbReference type="InterPro" id="IPR000740">
    <property type="entry name" value="GrpE"/>
</dbReference>
<dbReference type="InterPro" id="IPR013805">
    <property type="entry name" value="GrpE_coiled_coil"/>
</dbReference>
<dbReference type="InterPro" id="IPR009012">
    <property type="entry name" value="GrpE_head"/>
</dbReference>
<dbReference type="NCBIfam" id="NF010738">
    <property type="entry name" value="PRK14140.1"/>
    <property type="match status" value="1"/>
</dbReference>
<dbReference type="PANTHER" id="PTHR21237">
    <property type="entry name" value="GRPE PROTEIN"/>
    <property type="match status" value="1"/>
</dbReference>
<dbReference type="PANTHER" id="PTHR21237:SF23">
    <property type="entry name" value="GRPE PROTEIN HOMOLOG, MITOCHONDRIAL"/>
    <property type="match status" value="1"/>
</dbReference>
<dbReference type="Pfam" id="PF01025">
    <property type="entry name" value="GrpE"/>
    <property type="match status" value="1"/>
</dbReference>
<dbReference type="PRINTS" id="PR00773">
    <property type="entry name" value="GRPEPROTEIN"/>
</dbReference>
<dbReference type="SUPFAM" id="SSF58014">
    <property type="entry name" value="Coiled-coil domain of nucleotide exchange factor GrpE"/>
    <property type="match status" value="1"/>
</dbReference>
<dbReference type="SUPFAM" id="SSF51064">
    <property type="entry name" value="Head domain of nucleotide exchange factor GrpE"/>
    <property type="match status" value="1"/>
</dbReference>
<dbReference type="PROSITE" id="PS01071">
    <property type="entry name" value="GRPE"/>
    <property type="match status" value="1"/>
</dbReference>
<keyword id="KW-0143">Chaperone</keyword>
<keyword id="KW-0963">Cytoplasm</keyword>
<keyword id="KW-1185">Reference proteome</keyword>
<keyword id="KW-0346">Stress response</keyword>
<comment type="function">
    <text evidence="1">Participates actively in the response to hyperosmotic and heat shock by preventing the aggregation of stress-denatured proteins, in association with DnaK and GrpE. It is the nucleotide exchange factor for DnaK and may function as a thermosensor. Unfolded proteins bind initially to DnaJ; upon interaction with the DnaJ-bound protein, DnaK hydrolyzes its bound ATP, resulting in the formation of a stable complex. GrpE releases ADP from DnaK; ATP binding to DnaK triggers the release of the substrate protein, thus completing the reaction cycle. Several rounds of ATP-dependent interactions between DnaJ, DnaK and GrpE are required for fully efficient folding.</text>
</comment>
<comment type="subunit">
    <text evidence="1">Homodimer.</text>
</comment>
<comment type="subcellular location">
    <subcellularLocation>
        <location evidence="1">Cytoplasm</location>
    </subcellularLocation>
</comment>
<comment type="similarity">
    <text evidence="1">Belongs to the GrpE family.</text>
</comment>
<protein>
    <recommendedName>
        <fullName evidence="1">Protein GrpE</fullName>
    </recommendedName>
    <alternativeName>
        <fullName evidence="1">HSP-70 cofactor</fullName>
    </alternativeName>
</protein>
<accession>Q6MB27</accession>
<sequence>MVDKDEEQIKQNVEEDLSSTVEQTGEENIEFPSAPNHPKQVLVTDEELKALKKEATEYKDKYLRLLADSENARKRLQKERQEISRYALENMVVDFLKPLDNLENALKFAQGMSDEVKNWAFGFQMILTQFKDVLASNGITALESQGTFFDPHLHEAIEMVETDSYAPGIIVEENVRGYKMGDRMIRPARVKVAKAISAIDPQDKSELNENN</sequence>